<feature type="chain" id="PRO_0000182342" description="Putative transcriptional repressor NrdR">
    <location>
        <begin position="1"/>
        <end position="149"/>
    </location>
</feature>
<feature type="domain" description="ATP-cone" evidence="1">
    <location>
        <begin position="49"/>
        <end position="139"/>
    </location>
</feature>
<feature type="zinc finger region" evidence="1">
    <location>
        <begin position="3"/>
        <end position="34"/>
    </location>
</feature>
<accession>P0A2M2</accession>
<accession>Q8ZRD5</accession>
<reference key="1">
    <citation type="journal article" date="2001" name="Nature">
        <title>Complete genome sequence of a multiple drug resistant Salmonella enterica serovar Typhi CT18.</title>
        <authorList>
            <person name="Parkhill J."/>
            <person name="Dougan G."/>
            <person name="James K.D."/>
            <person name="Thomson N.R."/>
            <person name="Pickard D."/>
            <person name="Wain J."/>
            <person name="Churcher C.M."/>
            <person name="Mungall K.L."/>
            <person name="Bentley S.D."/>
            <person name="Holden M.T.G."/>
            <person name="Sebaihia M."/>
            <person name="Baker S."/>
            <person name="Basham D."/>
            <person name="Brooks K."/>
            <person name="Chillingworth T."/>
            <person name="Connerton P."/>
            <person name="Cronin A."/>
            <person name="Davis P."/>
            <person name="Davies R.M."/>
            <person name="Dowd L."/>
            <person name="White N."/>
            <person name="Farrar J."/>
            <person name="Feltwell T."/>
            <person name="Hamlin N."/>
            <person name="Haque A."/>
            <person name="Hien T.T."/>
            <person name="Holroyd S."/>
            <person name="Jagels K."/>
            <person name="Krogh A."/>
            <person name="Larsen T.S."/>
            <person name="Leather S."/>
            <person name="Moule S."/>
            <person name="O'Gaora P."/>
            <person name="Parry C."/>
            <person name="Quail M.A."/>
            <person name="Rutherford K.M."/>
            <person name="Simmonds M."/>
            <person name="Skelton J."/>
            <person name="Stevens K."/>
            <person name="Whitehead S."/>
            <person name="Barrell B.G."/>
        </authorList>
    </citation>
    <scope>NUCLEOTIDE SEQUENCE [LARGE SCALE GENOMIC DNA]</scope>
    <source>
        <strain>CT18</strain>
    </source>
</reference>
<reference key="2">
    <citation type="journal article" date="2003" name="J. Bacteriol.">
        <title>Comparative genomics of Salmonella enterica serovar Typhi strains Ty2 and CT18.</title>
        <authorList>
            <person name="Deng W."/>
            <person name="Liou S.-R."/>
            <person name="Plunkett G. III"/>
            <person name="Mayhew G.F."/>
            <person name="Rose D.J."/>
            <person name="Burland V."/>
            <person name="Kodoyianni V."/>
            <person name="Schwartz D.C."/>
            <person name="Blattner F.R."/>
        </authorList>
    </citation>
    <scope>NUCLEOTIDE SEQUENCE [LARGE SCALE GENOMIC DNA]</scope>
    <source>
        <strain>ATCC 700931 / Ty2</strain>
    </source>
</reference>
<evidence type="ECO:0000255" key="1">
    <source>
        <dbReference type="HAMAP-Rule" id="MF_00440"/>
    </source>
</evidence>
<evidence type="ECO:0000305" key="2"/>
<keyword id="KW-0067">ATP-binding</keyword>
<keyword id="KW-0238">DNA-binding</keyword>
<keyword id="KW-0479">Metal-binding</keyword>
<keyword id="KW-0547">Nucleotide-binding</keyword>
<keyword id="KW-0678">Repressor</keyword>
<keyword id="KW-0804">Transcription</keyword>
<keyword id="KW-0805">Transcription regulation</keyword>
<keyword id="KW-0862">Zinc</keyword>
<keyword id="KW-0863">Zinc-finger</keyword>
<gene>
    <name evidence="1" type="primary">nrdR</name>
    <name type="ordered locus">STY0453</name>
    <name type="ordered locus">t2448</name>
</gene>
<protein>
    <recommendedName>
        <fullName>Putative transcriptional repressor NrdR</fullName>
    </recommendedName>
</protein>
<name>NRDR_SALTI</name>
<organism>
    <name type="scientific">Salmonella typhi</name>
    <dbReference type="NCBI Taxonomy" id="90370"/>
    <lineage>
        <taxon>Bacteria</taxon>
        <taxon>Pseudomonadati</taxon>
        <taxon>Pseudomonadota</taxon>
        <taxon>Gammaproteobacteria</taxon>
        <taxon>Enterobacterales</taxon>
        <taxon>Enterobacteriaceae</taxon>
        <taxon>Salmonella</taxon>
    </lineage>
</organism>
<dbReference type="EMBL" id="AL513382">
    <property type="status" value="NOT_ANNOTATED_CDS"/>
    <property type="molecule type" value="Genomic_DNA"/>
</dbReference>
<dbReference type="EMBL" id="AE014613">
    <property type="protein sequence ID" value="AAO70038.1"/>
    <property type="molecule type" value="Genomic_DNA"/>
</dbReference>
<dbReference type="RefSeq" id="WP_000543533.1">
    <property type="nucleotide sequence ID" value="NZ_WSUR01000026.1"/>
</dbReference>
<dbReference type="SMR" id="P0A2M2"/>
<dbReference type="GeneID" id="66754886"/>
<dbReference type="KEGG" id="stt:t2448"/>
<dbReference type="PATRIC" id="fig|90370.929.peg.1698"/>
<dbReference type="HOGENOM" id="CLU_108412_0_0_6"/>
<dbReference type="OMA" id="YRFTTYE"/>
<dbReference type="OrthoDB" id="9807461at2"/>
<dbReference type="Proteomes" id="UP000000541">
    <property type="component" value="Chromosome"/>
</dbReference>
<dbReference type="Proteomes" id="UP000002670">
    <property type="component" value="Chromosome"/>
</dbReference>
<dbReference type="GO" id="GO:0005524">
    <property type="term" value="F:ATP binding"/>
    <property type="evidence" value="ECO:0007669"/>
    <property type="project" value="UniProtKB-KW"/>
</dbReference>
<dbReference type="GO" id="GO:0003677">
    <property type="term" value="F:DNA binding"/>
    <property type="evidence" value="ECO:0007669"/>
    <property type="project" value="UniProtKB-KW"/>
</dbReference>
<dbReference type="GO" id="GO:0008270">
    <property type="term" value="F:zinc ion binding"/>
    <property type="evidence" value="ECO:0007669"/>
    <property type="project" value="UniProtKB-UniRule"/>
</dbReference>
<dbReference type="GO" id="GO:0045892">
    <property type="term" value="P:negative regulation of DNA-templated transcription"/>
    <property type="evidence" value="ECO:0007669"/>
    <property type="project" value="UniProtKB-UniRule"/>
</dbReference>
<dbReference type="HAMAP" id="MF_00440">
    <property type="entry name" value="NrdR"/>
    <property type="match status" value="1"/>
</dbReference>
<dbReference type="InterPro" id="IPR005144">
    <property type="entry name" value="ATP-cone_dom"/>
</dbReference>
<dbReference type="InterPro" id="IPR055173">
    <property type="entry name" value="NrdR-like_N"/>
</dbReference>
<dbReference type="InterPro" id="IPR003796">
    <property type="entry name" value="RNR_NrdR-like"/>
</dbReference>
<dbReference type="NCBIfam" id="TIGR00244">
    <property type="entry name" value="transcriptional regulator NrdR"/>
    <property type="match status" value="1"/>
</dbReference>
<dbReference type="PANTHER" id="PTHR30455">
    <property type="entry name" value="TRANSCRIPTIONAL REPRESSOR NRDR"/>
    <property type="match status" value="1"/>
</dbReference>
<dbReference type="PANTHER" id="PTHR30455:SF2">
    <property type="entry name" value="TRANSCRIPTIONAL REPRESSOR NRDR"/>
    <property type="match status" value="1"/>
</dbReference>
<dbReference type="Pfam" id="PF03477">
    <property type="entry name" value="ATP-cone"/>
    <property type="match status" value="1"/>
</dbReference>
<dbReference type="Pfam" id="PF22811">
    <property type="entry name" value="Zn_ribbon_NrdR"/>
    <property type="match status" value="1"/>
</dbReference>
<dbReference type="PROSITE" id="PS51161">
    <property type="entry name" value="ATP_CONE"/>
    <property type="match status" value="1"/>
</dbReference>
<sequence length="149" mass="17198">MHCPFCFAVDTKVIDSRLVGEGSSVRRRRQCLVCNERFTTFEVAELVMPRVIKSNDVREPFNEDKLRSGMLRALEKRPVSADDVEMALNHIKSQLRATGEREVPSKMIGNLVMEQLKKLDKVAYIRFASVYRSFEDIKDFGEEIARLQD</sequence>
<comment type="function">
    <text evidence="1">Negatively regulates transcription of bacterial ribonucleotide reductase nrd genes and operons by binding to NrdR-boxes.</text>
</comment>
<comment type="cofactor">
    <cofactor evidence="1">
        <name>Zn(2+)</name>
        <dbReference type="ChEBI" id="CHEBI:29105"/>
    </cofactor>
    <text evidence="1">Binds 1 zinc ion.</text>
</comment>
<comment type="similarity">
    <text evidence="1">Belongs to the NrdR family.</text>
</comment>
<comment type="caution">
    <text evidence="2">Could be the product of a pseudogene in strain CT18.</text>
</comment>
<comment type="sequence caution" evidence="2">
    <conflict type="erroneous termination">
        <sequence resource="EMBL" id="AL513382"/>
    </conflict>
    <text>Truncated C-terminus.</text>
</comment>
<comment type="sequence caution" evidence="2">
    <conflict type="frameshift">
        <sequence resource="EMBL" id="AL513382"/>
    </conflict>
</comment>
<proteinExistence type="uncertain"/>